<feature type="chain" id="PRO_0000052593" description="Hemoglobin subunit alpha">
    <location>
        <begin position="1"/>
        <end position="141"/>
    </location>
</feature>
<feature type="peptide" id="PRO_0000455853" description="Hemopressin" evidence="2">
    <location>
        <begin position="95"/>
        <end position="103"/>
    </location>
</feature>
<feature type="domain" description="Globin" evidence="4">
    <location>
        <begin position="1"/>
        <end position="141"/>
    </location>
</feature>
<feature type="binding site" evidence="4">
    <location>
        <position position="58"/>
    </location>
    <ligand>
        <name>O2</name>
        <dbReference type="ChEBI" id="CHEBI:15379"/>
    </ligand>
</feature>
<feature type="binding site" description="proximal binding residue" evidence="4">
    <location>
        <position position="87"/>
    </location>
    <ligand>
        <name>heme b</name>
        <dbReference type="ChEBI" id="CHEBI:60344"/>
    </ligand>
    <ligandPart>
        <name>Fe</name>
        <dbReference type="ChEBI" id="CHEBI:18248"/>
    </ligandPart>
</feature>
<feature type="modified residue" description="Phosphoserine" evidence="3">
    <location>
        <position position="3"/>
    </location>
</feature>
<feature type="modified residue" description="N6-succinyllysine" evidence="1">
    <location>
        <position position="7"/>
    </location>
</feature>
<feature type="modified residue" description="Phosphothreonine" evidence="3">
    <location>
        <position position="8"/>
    </location>
</feature>
<feature type="modified residue" description="N6-succinyllysine" evidence="1">
    <location>
        <position position="11"/>
    </location>
</feature>
<feature type="modified residue" description="N6-acetyllysine; alternate" evidence="3">
    <location>
        <position position="16"/>
    </location>
</feature>
<feature type="modified residue" description="N6-succinyllysine; alternate" evidence="1">
    <location>
        <position position="16"/>
    </location>
</feature>
<feature type="modified residue" description="Phosphotyrosine" evidence="3">
    <location>
        <position position="24"/>
    </location>
</feature>
<feature type="modified residue" description="Phosphoserine" evidence="3">
    <location>
        <position position="35"/>
    </location>
</feature>
<feature type="modified residue" description="N6-succinyllysine" evidence="1">
    <location>
        <position position="40"/>
    </location>
</feature>
<feature type="modified residue" description="Phosphoserine" evidence="3">
    <location>
        <position position="49"/>
    </location>
</feature>
<feature type="modified residue" description="Phosphoserine" evidence="1">
    <location>
        <position position="102"/>
    </location>
</feature>
<feature type="modified residue" description="Phosphothreonine" evidence="1">
    <location>
        <position position="108"/>
    </location>
</feature>
<feature type="modified residue" description="Phosphoserine" evidence="1">
    <location>
        <position position="124"/>
    </location>
</feature>
<feature type="modified residue" description="Phosphoserine" evidence="1">
    <location>
        <position position="131"/>
    </location>
</feature>
<feature type="modified residue" description="Phosphothreonine" evidence="1">
    <location>
        <position position="134"/>
    </location>
</feature>
<feature type="modified residue" description="Phosphothreonine" evidence="1">
    <location>
        <position position="137"/>
    </location>
</feature>
<feature type="modified residue" description="Phosphoserine" evidence="1">
    <location>
        <position position="138"/>
    </location>
</feature>
<dbReference type="PIR" id="A25477">
    <property type="entry name" value="A25477"/>
</dbReference>
<dbReference type="SMR" id="P07421"/>
<dbReference type="GO" id="GO:0072562">
    <property type="term" value="C:blood microparticle"/>
    <property type="evidence" value="ECO:0007669"/>
    <property type="project" value="TreeGrafter"/>
</dbReference>
<dbReference type="GO" id="GO:0031838">
    <property type="term" value="C:haptoglobin-hemoglobin complex"/>
    <property type="evidence" value="ECO:0007669"/>
    <property type="project" value="TreeGrafter"/>
</dbReference>
<dbReference type="GO" id="GO:0005833">
    <property type="term" value="C:hemoglobin complex"/>
    <property type="evidence" value="ECO:0007669"/>
    <property type="project" value="InterPro"/>
</dbReference>
<dbReference type="GO" id="GO:0031720">
    <property type="term" value="F:haptoglobin binding"/>
    <property type="evidence" value="ECO:0007669"/>
    <property type="project" value="TreeGrafter"/>
</dbReference>
<dbReference type="GO" id="GO:0020037">
    <property type="term" value="F:heme binding"/>
    <property type="evidence" value="ECO:0007669"/>
    <property type="project" value="InterPro"/>
</dbReference>
<dbReference type="GO" id="GO:0005506">
    <property type="term" value="F:iron ion binding"/>
    <property type="evidence" value="ECO:0007669"/>
    <property type="project" value="InterPro"/>
</dbReference>
<dbReference type="GO" id="GO:0043177">
    <property type="term" value="F:organic acid binding"/>
    <property type="evidence" value="ECO:0007669"/>
    <property type="project" value="TreeGrafter"/>
</dbReference>
<dbReference type="GO" id="GO:0019825">
    <property type="term" value="F:oxygen binding"/>
    <property type="evidence" value="ECO:0007669"/>
    <property type="project" value="InterPro"/>
</dbReference>
<dbReference type="GO" id="GO:0005344">
    <property type="term" value="F:oxygen carrier activity"/>
    <property type="evidence" value="ECO:0007669"/>
    <property type="project" value="UniProtKB-KW"/>
</dbReference>
<dbReference type="GO" id="GO:0004601">
    <property type="term" value="F:peroxidase activity"/>
    <property type="evidence" value="ECO:0007669"/>
    <property type="project" value="TreeGrafter"/>
</dbReference>
<dbReference type="GO" id="GO:0042744">
    <property type="term" value="P:hydrogen peroxide catabolic process"/>
    <property type="evidence" value="ECO:0007669"/>
    <property type="project" value="TreeGrafter"/>
</dbReference>
<dbReference type="CDD" id="cd08927">
    <property type="entry name" value="Hb-alpha-like"/>
    <property type="match status" value="1"/>
</dbReference>
<dbReference type="FunFam" id="1.10.490.10:FF:000002">
    <property type="entry name" value="Hemoglobin subunit alpha"/>
    <property type="match status" value="1"/>
</dbReference>
<dbReference type="Gene3D" id="1.10.490.10">
    <property type="entry name" value="Globins"/>
    <property type="match status" value="1"/>
</dbReference>
<dbReference type="InterPro" id="IPR000971">
    <property type="entry name" value="Globin"/>
</dbReference>
<dbReference type="InterPro" id="IPR009050">
    <property type="entry name" value="Globin-like_sf"/>
</dbReference>
<dbReference type="InterPro" id="IPR012292">
    <property type="entry name" value="Globin/Proto"/>
</dbReference>
<dbReference type="InterPro" id="IPR002338">
    <property type="entry name" value="Hemoglobin_a-typ"/>
</dbReference>
<dbReference type="InterPro" id="IPR050056">
    <property type="entry name" value="Hemoglobin_oxygen_transport"/>
</dbReference>
<dbReference type="InterPro" id="IPR002339">
    <property type="entry name" value="Hemoglobin_pi"/>
</dbReference>
<dbReference type="PANTHER" id="PTHR11442">
    <property type="entry name" value="HEMOGLOBIN FAMILY MEMBER"/>
    <property type="match status" value="1"/>
</dbReference>
<dbReference type="PANTHER" id="PTHR11442:SF48">
    <property type="entry name" value="HEMOGLOBIN SUBUNIT ALPHA"/>
    <property type="match status" value="1"/>
</dbReference>
<dbReference type="Pfam" id="PF00042">
    <property type="entry name" value="Globin"/>
    <property type="match status" value="1"/>
</dbReference>
<dbReference type="PRINTS" id="PR00612">
    <property type="entry name" value="ALPHAHAEM"/>
</dbReference>
<dbReference type="PRINTS" id="PR00815">
    <property type="entry name" value="PIHAEM"/>
</dbReference>
<dbReference type="SUPFAM" id="SSF46458">
    <property type="entry name" value="Globin-like"/>
    <property type="match status" value="1"/>
</dbReference>
<dbReference type="PROSITE" id="PS01033">
    <property type="entry name" value="GLOBIN"/>
    <property type="match status" value="1"/>
</dbReference>
<sequence length="141" mass="15124">VLSPADKTNVKTAWGKVGAHAGDYGADALERMFLSFPTTKTYFPHFDLSHGSAQVKGHGKKVADALSNAVAHVDDMPNALSALSDLHAHKLRVDPVNFKLLSHCLLVTLAAHHPADFTPAVHASLDKFLASVSTVLTSKYR</sequence>
<reference key="1">
    <citation type="journal article" date="1986" name="Biol. Chem. Hoppe-Seyler">
        <title>Primary structure of adult hemoglobin of white-throated capuchin, Cebus capucinus.</title>
        <authorList>
            <person name="Tanioka Y."/>
            <person name="Araya A."/>
            <person name="Maita T."/>
            <person name="Matsuda G."/>
        </authorList>
    </citation>
    <scope>PROTEIN SEQUENCE</scope>
</reference>
<accession>P07421</accession>
<protein>
    <recommendedName>
        <fullName>Hemoglobin subunit alpha</fullName>
    </recommendedName>
    <alternativeName>
        <fullName>Alpha-globin</fullName>
    </alternativeName>
    <alternativeName>
        <fullName>Hemoglobin alpha chain</fullName>
    </alternativeName>
    <component>
        <recommendedName>
            <fullName evidence="2">Hemopressin</fullName>
        </recommendedName>
    </component>
</protein>
<proteinExistence type="evidence at protein level"/>
<gene>
    <name type="primary">HBA</name>
</gene>
<organism>
    <name type="scientific">Cebus capucinus</name>
    <name type="common">White-faced sapajou</name>
    <dbReference type="NCBI Taxonomy" id="9516"/>
    <lineage>
        <taxon>Eukaryota</taxon>
        <taxon>Metazoa</taxon>
        <taxon>Chordata</taxon>
        <taxon>Craniata</taxon>
        <taxon>Vertebrata</taxon>
        <taxon>Euteleostomi</taxon>
        <taxon>Mammalia</taxon>
        <taxon>Eutheria</taxon>
        <taxon>Euarchontoglires</taxon>
        <taxon>Primates</taxon>
        <taxon>Haplorrhini</taxon>
        <taxon>Platyrrhini</taxon>
        <taxon>Cebidae</taxon>
        <taxon>Cebinae</taxon>
        <taxon>Cebus</taxon>
    </lineage>
</organism>
<comment type="function">
    <text>Involved in oxygen transport from the lung to the various peripheral tissues.</text>
</comment>
<comment type="function">
    <molecule>Hemopressin</molecule>
    <text evidence="2">Hemopressin acts as an antagonist peptide of the cannabinoid receptor CNR1. Hemopressin-binding efficiently blocks cannabinoid receptor CNR1 and subsequent signaling.</text>
</comment>
<comment type="subunit">
    <text>Heterotetramer of two alpha chains and two beta chains.</text>
</comment>
<comment type="tissue specificity">
    <text>Red blood cells.</text>
</comment>
<comment type="similarity">
    <text evidence="4">Belongs to the globin family.</text>
</comment>
<evidence type="ECO:0000250" key="1">
    <source>
        <dbReference type="UniProtKB" id="P01942"/>
    </source>
</evidence>
<evidence type="ECO:0000250" key="2">
    <source>
        <dbReference type="UniProtKB" id="P01946"/>
    </source>
</evidence>
<evidence type="ECO:0000250" key="3">
    <source>
        <dbReference type="UniProtKB" id="P69905"/>
    </source>
</evidence>
<evidence type="ECO:0000255" key="4">
    <source>
        <dbReference type="PROSITE-ProRule" id="PRU00238"/>
    </source>
</evidence>
<name>HBA_CEBCA</name>
<keyword id="KW-0007">Acetylation</keyword>
<keyword id="KW-0903">Direct protein sequencing</keyword>
<keyword id="KW-0349">Heme</keyword>
<keyword id="KW-0408">Iron</keyword>
<keyword id="KW-0479">Metal-binding</keyword>
<keyword id="KW-0561">Oxygen transport</keyword>
<keyword id="KW-0597">Phosphoprotein</keyword>
<keyword id="KW-0813">Transport</keyword>